<feature type="propeptide" id="PRO_0000024228" description="Leader sequence" evidence="1">
    <location>
        <begin position="1"/>
        <end position="29"/>
    </location>
</feature>
<feature type="chain" id="PRO_0000449530" description="Type II secretion system protein H">
    <location>
        <begin position="30"/>
        <end position="169"/>
    </location>
</feature>
<feature type="transmembrane region" description="Helical" evidence="2">
    <location>
        <begin position="32"/>
        <end position="52"/>
    </location>
</feature>
<feature type="modified residue" description="N-methylmethionine" evidence="4">
    <location>
        <position position="30"/>
    </location>
</feature>
<feature type="sequence conflict" description="In Ref. 2; AAC27378." evidence="4" ref="2">
    <original>L</original>
    <variation>F</variation>
    <location>
        <position position="8"/>
    </location>
</feature>
<feature type="sequence conflict" description="In Ref. 2; AAC27378." evidence="4" ref="2">
    <original>H</original>
    <variation>S</variation>
    <location>
        <position position="10"/>
    </location>
</feature>
<name>GSPH_XANCP</name>
<keyword id="KW-0997">Cell inner membrane</keyword>
<keyword id="KW-1003">Cell membrane</keyword>
<keyword id="KW-0472">Membrane</keyword>
<keyword id="KW-0488">Methylation</keyword>
<keyword id="KW-0653">Protein transport</keyword>
<keyword id="KW-1185">Reference proteome</keyword>
<keyword id="KW-0812">Transmembrane</keyword>
<keyword id="KW-1133">Transmembrane helix</keyword>
<keyword id="KW-0813">Transport</keyword>
<accession>P31736</accession>
<gene>
    <name type="primary">xpsH</name>
    <name type="synonym">pefH</name>
    <name type="ordered locus">XCC0663</name>
</gene>
<dbReference type="EMBL" id="X59079">
    <property type="protein sequence ID" value="CAA41806.1"/>
    <property type="molecule type" value="Genomic_DNA"/>
</dbReference>
<dbReference type="EMBL" id="L02630">
    <property type="protein sequence ID" value="AAC27378.1"/>
    <property type="molecule type" value="Genomic_DNA"/>
</dbReference>
<dbReference type="EMBL" id="AE008922">
    <property type="protein sequence ID" value="AAM39979.1"/>
    <property type="molecule type" value="Genomic_DNA"/>
</dbReference>
<dbReference type="PIR" id="S17940">
    <property type="entry name" value="S17940"/>
</dbReference>
<dbReference type="RefSeq" id="NP_636055.1">
    <property type="nucleotide sequence ID" value="NC_003902.1"/>
</dbReference>
<dbReference type="RefSeq" id="WP_011035903.1">
    <property type="nucleotide sequence ID" value="NC_003902.1"/>
</dbReference>
<dbReference type="SMR" id="P31736"/>
<dbReference type="STRING" id="190485.XCC0663"/>
<dbReference type="EnsemblBacteria" id="AAM39979">
    <property type="protein sequence ID" value="AAM39979"/>
    <property type="gene ID" value="XCC0663"/>
</dbReference>
<dbReference type="KEGG" id="xcc:XCC0663"/>
<dbReference type="PATRIC" id="fig|190485.4.peg.728"/>
<dbReference type="eggNOG" id="COG4970">
    <property type="taxonomic scope" value="Bacteria"/>
</dbReference>
<dbReference type="HOGENOM" id="CLU_123291_0_0_6"/>
<dbReference type="OrthoDB" id="8481584at2"/>
<dbReference type="Proteomes" id="UP000001010">
    <property type="component" value="Chromosome"/>
</dbReference>
<dbReference type="GO" id="GO:0005886">
    <property type="term" value="C:plasma membrane"/>
    <property type="evidence" value="ECO:0007669"/>
    <property type="project" value="UniProtKB-SubCell"/>
</dbReference>
<dbReference type="GO" id="GO:0015627">
    <property type="term" value="C:type II protein secretion system complex"/>
    <property type="evidence" value="ECO:0007669"/>
    <property type="project" value="InterPro"/>
</dbReference>
<dbReference type="GO" id="GO:0015628">
    <property type="term" value="P:protein secretion by the type II secretion system"/>
    <property type="evidence" value="ECO:0007669"/>
    <property type="project" value="InterPro"/>
</dbReference>
<dbReference type="InterPro" id="IPR045584">
    <property type="entry name" value="Pilin-like"/>
</dbReference>
<dbReference type="InterPro" id="IPR022346">
    <property type="entry name" value="T2SS_GspH"/>
</dbReference>
<dbReference type="NCBIfam" id="NF047827">
    <property type="entry name" value="T3SSXpsH"/>
    <property type="match status" value="1"/>
</dbReference>
<dbReference type="Pfam" id="PF12019">
    <property type="entry name" value="GspH"/>
    <property type="match status" value="1"/>
</dbReference>
<dbReference type="SUPFAM" id="SSF54523">
    <property type="entry name" value="Pili subunits"/>
    <property type="match status" value="1"/>
</dbReference>
<sequence length="169" mass="18235">MRVARLPLLHPHRAAPVVRRQLRGSSLLEMLLVIALIALAGVLAAAALTGGIDGMRLRSAGKAIAAQLRYTRTQAIATGTPQRFLIDPQQRRWEAPGGHHGDLPAALEVRFTGARQVQSRQDQGAIQFFADGASTGGRIDLTIKDARWRVDVGWITGEVRSGPLRTPAP</sequence>
<reference key="1">
    <citation type="journal article" date="1991" name="Mol. Gen. Genet.">
        <title>Structural characterization of protein secretion genes of the bacterial phytopathogen Xanthomonas campestris pathovar campestris: relatedness to secretion systems of other Gram-negative bacteria.</title>
        <authorList>
            <person name="Dums F."/>
            <person name="Dow J.M."/>
            <person name="Daniels M.J."/>
        </authorList>
    </citation>
    <scope>NUCLEOTIDE SEQUENCE [GENOMIC DNA]</scope>
    <source>
        <strain>8000 NCPPB 1145</strain>
    </source>
</reference>
<reference key="2">
    <citation type="submission" date="1993-04" db="EMBL/GenBank/DDBJ databases">
        <authorList>
            <person name="Hu N.-T.T."/>
            <person name="Hung M.-N."/>
            <person name="Wang K.C."/>
        </authorList>
    </citation>
    <scope>NUCLEOTIDE SEQUENCE [GENOMIC DNA]</scope>
    <source>
        <strain>Xc1701</strain>
    </source>
</reference>
<reference key="3">
    <citation type="journal article" date="2002" name="Nature">
        <title>Comparison of the genomes of two Xanthomonas pathogens with differing host specificities.</title>
        <authorList>
            <person name="da Silva A.C.R."/>
            <person name="Ferro J.A."/>
            <person name="Reinach F.C."/>
            <person name="Farah C.S."/>
            <person name="Furlan L.R."/>
            <person name="Quaggio R.B."/>
            <person name="Monteiro-Vitorello C.B."/>
            <person name="Van Sluys M.A."/>
            <person name="Almeida N.F. Jr."/>
            <person name="Alves L.M.C."/>
            <person name="do Amaral A.M."/>
            <person name="Bertolini M.C."/>
            <person name="Camargo L.E.A."/>
            <person name="Camarotte G."/>
            <person name="Cannavan F."/>
            <person name="Cardozo J."/>
            <person name="Chambergo F."/>
            <person name="Ciapina L.P."/>
            <person name="Cicarelli R.M.B."/>
            <person name="Coutinho L.L."/>
            <person name="Cursino-Santos J.R."/>
            <person name="El-Dorry H."/>
            <person name="Faria J.B."/>
            <person name="Ferreira A.J.S."/>
            <person name="Ferreira R.C.C."/>
            <person name="Ferro M.I.T."/>
            <person name="Formighieri E.F."/>
            <person name="Franco M.C."/>
            <person name="Greggio C.C."/>
            <person name="Gruber A."/>
            <person name="Katsuyama A.M."/>
            <person name="Kishi L.T."/>
            <person name="Leite R.P."/>
            <person name="Lemos E.G.M."/>
            <person name="Lemos M.V.F."/>
            <person name="Locali E.C."/>
            <person name="Machado M.A."/>
            <person name="Madeira A.M.B.N."/>
            <person name="Martinez-Rossi N.M."/>
            <person name="Martins E.C."/>
            <person name="Meidanis J."/>
            <person name="Menck C.F.M."/>
            <person name="Miyaki C.Y."/>
            <person name="Moon D.H."/>
            <person name="Moreira L.M."/>
            <person name="Novo M.T.M."/>
            <person name="Okura V.K."/>
            <person name="Oliveira M.C."/>
            <person name="Oliveira V.R."/>
            <person name="Pereira H.A."/>
            <person name="Rossi A."/>
            <person name="Sena J.A.D."/>
            <person name="Silva C."/>
            <person name="de Souza R.F."/>
            <person name="Spinola L.A.F."/>
            <person name="Takita M.A."/>
            <person name="Tamura R.E."/>
            <person name="Teixeira E.C."/>
            <person name="Tezza R.I.D."/>
            <person name="Trindade dos Santos M."/>
            <person name="Truffi D."/>
            <person name="Tsai S.M."/>
            <person name="White F.F."/>
            <person name="Setubal J.C."/>
            <person name="Kitajima J.P."/>
        </authorList>
    </citation>
    <scope>NUCLEOTIDE SEQUENCE [LARGE SCALE GENOMIC DNA]</scope>
    <source>
        <strain>ATCC 33913 / DSM 3586 / NCPPB 528 / LMG 568 / P 25</strain>
    </source>
</reference>
<reference key="4">
    <citation type="journal article" date="2002" name="Biochem. J.">
        <title>XpsG, the major pseudopilin in Xanthomonas campestris pv. campestris, forms a pilus-like structure between cytoplasmic and outer membranes.</title>
        <authorList>
            <person name="Hu N.T."/>
            <person name="Leu W.M."/>
            <person name="Lee M.S."/>
            <person name="Chen A."/>
            <person name="Chen S.C."/>
            <person name="Song Y.L."/>
            <person name="Chen L.Y."/>
        </authorList>
    </citation>
    <scope>FUNCTION</scope>
    <scope>INTERACTION WITH XPSG</scope>
</reference>
<reference key="5">
    <citation type="journal article" date="2005" name="J. Biomed. Sci.">
        <title>Roles of the minor pseudopilins, XpsH, XpsI and XpsJ, in the formation of XpsG-containing pseudopilus in Xanthomonas campestris pv. campestris.</title>
        <authorList>
            <person name="Kuo W.W."/>
            <person name="Kuo H.W."/>
            <person name="Cheng C.C."/>
            <person name="Lai H.L."/>
            <person name="Chen L.Y."/>
        </authorList>
    </citation>
    <scope>FUNCTION</scope>
    <scope>INTERACTION WITH XPSG; XPSI AND XPSJ</scope>
</reference>
<protein>
    <recommendedName>
        <fullName>Type II secretion system protein H</fullName>
        <shortName>T2SS minor pseudopilin H</shortName>
    </recommendedName>
    <alternativeName>
        <fullName>General secretion pathway protein H</fullName>
    </alternativeName>
</protein>
<proteinExistence type="evidence at protein level"/>
<evidence type="ECO:0000250" key="1">
    <source>
        <dbReference type="UniProtKB" id="Q00515"/>
    </source>
</evidence>
<evidence type="ECO:0000255" key="2"/>
<evidence type="ECO:0000269" key="3">
    <source>
    </source>
</evidence>
<evidence type="ECO:0000305" key="4"/>
<comment type="function">
    <text evidence="1">Component of the type II secretion system required for the energy-dependent secretion of extracellular factors such as proteases and toxins from the periplasm. Part of the pseudopilus tip complex that is critical for the recognition and binding of secretion substrates.</text>
</comment>
<comment type="subunit">
    <text evidence="1 3">Type II secretion is composed of four main components: the outer membrane complex, the inner membrane complex, the cytoplasmic secretion ATPase and the periplasm-spanning pseudopilus (By similarity). Interacts with core component XpsG (PubMed:16078004). Interacts with minor pseudopilins XpsI and XpsJ (PubMed:16078004).</text>
</comment>
<comment type="subcellular location">
    <subcellularLocation>
        <location evidence="1">Cell inner membrane</location>
        <topology evidence="2">Single-pass membrane protein</topology>
    </subcellularLocation>
</comment>
<comment type="PTM">
    <text evidence="1">Cleaved by prepilin peptidase.</text>
</comment>
<comment type="PTM">
    <text evidence="1">Methylated by prepilin peptidase at the amino group of the N-terminal phenylalanine once the leader sequence is cleaved by prepilin peptidase.</text>
</comment>
<comment type="similarity">
    <text evidence="4">Belongs to the GSP H family.</text>
</comment>
<organism>
    <name type="scientific">Xanthomonas campestris pv. campestris (strain ATCC 33913 / DSM 3586 / NCPPB 528 / LMG 568 / P 25)</name>
    <dbReference type="NCBI Taxonomy" id="190485"/>
    <lineage>
        <taxon>Bacteria</taxon>
        <taxon>Pseudomonadati</taxon>
        <taxon>Pseudomonadota</taxon>
        <taxon>Gammaproteobacteria</taxon>
        <taxon>Lysobacterales</taxon>
        <taxon>Lysobacteraceae</taxon>
        <taxon>Xanthomonas</taxon>
    </lineage>
</organism>